<feature type="chain" id="PRO_0000267469" description="dTTP/UTP pyrophosphatase">
    <location>
        <begin position="1"/>
        <end position="190"/>
    </location>
</feature>
<feature type="active site" description="Proton acceptor" evidence="1">
    <location>
        <position position="71"/>
    </location>
</feature>
<feature type="site" description="Important for substrate specificity" evidence="1">
    <location>
        <position position="10"/>
    </location>
</feature>
<feature type="site" description="Important for substrate specificity" evidence="1">
    <location>
        <position position="72"/>
    </location>
</feature>
<feature type="site" description="Important for substrate specificity" evidence="1">
    <location>
        <position position="155"/>
    </location>
</feature>
<name>NTPPA_XANOR</name>
<accession>Q5GXK1</accession>
<keyword id="KW-0963">Cytoplasm</keyword>
<keyword id="KW-0378">Hydrolase</keyword>
<keyword id="KW-0546">Nucleotide metabolism</keyword>
<keyword id="KW-1185">Reference proteome</keyword>
<comment type="function">
    <text evidence="1">Nucleoside triphosphate pyrophosphatase that hydrolyzes dTTP and UTP. May have a dual role in cell division arrest and in preventing the incorporation of modified nucleotides into cellular nucleic acids.</text>
</comment>
<comment type="catalytic activity">
    <reaction evidence="1">
        <text>dTTP + H2O = dTMP + diphosphate + H(+)</text>
        <dbReference type="Rhea" id="RHEA:28534"/>
        <dbReference type="ChEBI" id="CHEBI:15377"/>
        <dbReference type="ChEBI" id="CHEBI:15378"/>
        <dbReference type="ChEBI" id="CHEBI:33019"/>
        <dbReference type="ChEBI" id="CHEBI:37568"/>
        <dbReference type="ChEBI" id="CHEBI:63528"/>
        <dbReference type="EC" id="3.6.1.9"/>
    </reaction>
</comment>
<comment type="catalytic activity">
    <reaction evidence="1">
        <text>UTP + H2O = UMP + diphosphate + H(+)</text>
        <dbReference type="Rhea" id="RHEA:29395"/>
        <dbReference type="ChEBI" id="CHEBI:15377"/>
        <dbReference type="ChEBI" id="CHEBI:15378"/>
        <dbReference type="ChEBI" id="CHEBI:33019"/>
        <dbReference type="ChEBI" id="CHEBI:46398"/>
        <dbReference type="ChEBI" id="CHEBI:57865"/>
        <dbReference type="EC" id="3.6.1.9"/>
    </reaction>
</comment>
<comment type="cofactor">
    <cofactor evidence="1">
        <name>a divalent metal cation</name>
        <dbReference type="ChEBI" id="CHEBI:60240"/>
    </cofactor>
</comment>
<comment type="subcellular location">
    <subcellularLocation>
        <location evidence="1">Cytoplasm</location>
    </subcellularLocation>
</comment>
<comment type="similarity">
    <text evidence="1">Belongs to the Maf family. YhdE subfamily.</text>
</comment>
<comment type="sequence caution" evidence="2">
    <conflict type="erroneous initiation">
        <sequence resource="EMBL-CDS" id="AAW76570"/>
    </conflict>
</comment>
<protein>
    <recommendedName>
        <fullName evidence="1">dTTP/UTP pyrophosphatase</fullName>
        <shortName evidence="1">dTTPase/UTPase</shortName>
        <ecNumber evidence="1">3.6.1.9</ecNumber>
    </recommendedName>
    <alternativeName>
        <fullName evidence="1">Nucleoside triphosphate pyrophosphatase</fullName>
    </alternativeName>
    <alternativeName>
        <fullName evidence="1">Nucleotide pyrophosphatase</fullName>
        <shortName evidence="1">Nucleotide PPase</shortName>
    </alternativeName>
</protein>
<dbReference type="EC" id="3.6.1.9" evidence="1"/>
<dbReference type="EMBL" id="AE013598">
    <property type="protein sequence ID" value="AAW76570.1"/>
    <property type="status" value="ALT_INIT"/>
    <property type="molecule type" value="Genomic_DNA"/>
</dbReference>
<dbReference type="SMR" id="Q5GXK1"/>
<dbReference type="STRING" id="291331.XOO3316"/>
<dbReference type="KEGG" id="xoo:XOO3316"/>
<dbReference type="HOGENOM" id="CLU_040416_2_1_6"/>
<dbReference type="Proteomes" id="UP000006735">
    <property type="component" value="Chromosome"/>
</dbReference>
<dbReference type="GO" id="GO:0005737">
    <property type="term" value="C:cytoplasm"/>
    <property type="evidence" value="ECO:0007669"/>
    <property type="project" value="UniProtKB-SubCell"/>
</dbReference>
<dbReference type="GO" id="GO:0036218">
    <property type="term" value="F:dTTP diphosphatase activity"/>
    <property type="evidence" value="ECO:0007669"/>
    <property type="project" value="RHEA"/>
</dbReference>
<dbReference type="GO" id="GO:0036221">
    <property type="term" value="F:UTP diphosphatase activity"/>
    <property type="evidence" value="ECO:0007669"/>
    <property type="project" value="RHEA"/>
</dbReference>
<dbReference type="GO" id="GO:0009117">
    <property type="term" value="P:nucleotide metabolic process"/>
    <property type="evidence" value="ECO:0007669"/>
    <property type="project" value="UniProtKB-KW"/>
</dbReference>
<dbReference type="CDD" id="cd00555">
    <property type="entry name" value="Maf"/>
    <property type="match status" value="1"/>
</dbReference>
<dbReference type="Gene3D" id="3.90.950.10">
    <property type="match status" value="1"/>
</dbReference>
<dbReference type="HAMAP" id="MF_00528">
    <property type="entry name" value="Maf"/>
    <property type="match status" value="1"/>
</dbReference>
<dbReference type="InterPro" id="IPR029001">
    <property type="entry name" value="ITPase-like_fam"/>
</dbReference>
<dbReference type="InterPro" id="IPR003697">
    <property type="entry name" value="Maf-like"/>
</dbReference>
<dbReference type="NCBIfam" id="TIGR00172">
    <property type="entry name" value="maf"/>
    <property type="match status" value="1"/>
</dbReference>
<dbReference type="NCBIfam" id="NF003403">
    <property type="entry name" value="PRK04694.1"/>
    <property type="match status" value="1"/>
</dbReference>
<dbReference type="PANTHER" id="PTHR43213">
    <property type="entry name" value="BIFUNCTIONAL DTTP/UTP PYROPHOSPHATASE/METHYLTRANSFERASE PROTEIN-RELATED"/>
    <property type="match status" value="1"/>
</dbReference>
<dbReference type="PANTHER" id="PTHR43213:SF5">
    <property type="entry name" value="BIFUNCTIONAL DTTP_UTP PYROPHOSPHATASE_METHYLTRANSFERASE PROTEIN-RELATED"/>
    <property type="match status" value="1"/>
</dbReference>
<dbReference type="Pfam" id="PF02545">
    <property type="entry name" value="Maf"/>
    <property type="match status" value="1"/>
</dbReference>
<dbReference type="PIRSF" id="PIRSF006305">
    <property type="entry name" value="Maf"/>
    <property type="match status" value="1"/>
</dbReference>
<dbReference type="SUPFAM" id="SSF52972">
    <property type="entry name" value="ITPase-like"/>
    <property type="match status" value="1"/>
</dbReference>
<proteinExistence type="inferred from homology"/>
<gene>
    <name type="ordered locus">XOO3316</name>
</gene>
<reference key="1">
    <citation type="journal article" date="2005" name="Nucleic Acids Res.">
        <title>The genome sequence of Xanthomonas oryzae pathovar oryzae KACC10331, the bacterial blight pathogen of rice.</title>
        <authorList>
            <person name="Lee B.-M."/>
            <person name="Park Y.-J."/>
            <person name="Park D.-S."/>
            <person name="Kang H.-W."/>
            <person name="Kim J.-G."/>
            <person name="Song E.-S."/>
            <person name="Park I.-C."/>
            <person name="Yoon U.-H."/>
            <person name="Hahn J.-H."/>
            <person name="Koo B.-S."/>
            <person name="Lee G.-B."/>
            <person name="Kim H."/>
            <person name="Park H.-S."/>
            <person name="Yoon K.-O."/>
            <person name="Kim J.-H."/>
            <person name="Jung C.-H."/>
            <person name="Koh N.-H."/>
            <person name="Seo J.-S."/>
            <person name="Go S.-J."/>
        </authorList>
    </citation>
    <scope>NUCLEOTIDE SEQUENCE [LARGE SCALE GENOMIC DNA]</scope>
    <source>
        <strain>KACC10331 / KXO85</strain>
    </source>
</reference>
<evidence type="ECO:0000255" key="1">
    <source>
        <dbReference type="HAMAP-Rule" id="MF_00528"/>
    </source>
</evidence>
<evidence type="ECO:0000305" key="2"/>
<sequence>MLYLASRSPRRQELLQRLDVPFQTVQLDVPELRAADESPDHYVQRVALDKAHAGLALVQAADPDAIVLGSDTEVVLGERVFGKPVDVDDAIAMLRALSGRTHQVLTAVVLVCAQRAPAQALVVSEVTFDRLDDAQIAAYAACGEPMGKAGAYAIQGRAERFIRHLSGSYSGVMGLPLYHTSQLLTAFGAH</sequence>
<organism>
    <name type="scientific">Xanthomonas oryzae pv. oryzae (strain KACC10331 / KXO85)</name>
    <dbReference type="NCBI Taxonomy" id="291331"/>
    <lineage>
        <taxon>Bacteria</taxon>
        <taxon>Pseudomonadati</taxon>
        <taxon>Pseudomonadota</taxon>
        <taxon>Gammaproteobacteria</taxon>
        <taxon>Lysobacterales</taxon>
        <taxon>Lysobacteraceae</taxon>
        <taxon>Xanthomonas</taxon>
    </lineage>
</organism>